<organism>
    <name type="scientific">Mesoplodon stejnegeri</name>
    <name type="common">Stejneger's beaked whale</name>
    <dbReference type="NCBI Taxonomy" id="52114"/>
    <lineage>
        <taxon>Eukaryota</taxon>
        <taxon>Metazoa</taxon>
        <taxon>Chordata</taxon>
        <taxon>Craniata</taxon>
        <taxon>Vertebrata</taxon>
        <taxon>Euteleostomi</taxon>
        <taxon>Mammalia</taxon>
        <taxon>Eutheria</taxon>
        <taxon>Laurasiatheria</taxon>
        <taxon>Artiodactyla</taxon>
        <taxon>Whippomorpha</taxon>
        <taxon>Cetacea</taxon>
        <taxon>Odontoceti</taxon>
        <taxon>Ziphiidae</taxon>
        <taxon>Mesoplodon</taxon>
    </lineage>
</organism>
<sequence>MGLSEAEWQLVLHVWAKVEADLSGHGQEILIRLFKGHPETLEKFDKFKHLKSEAEMKASEDLKKHGHTVLTALGGILKKKGHHEAELKPLAQSHATKHKIPIKYLEFISDAIIHVLHSKHPSDFGADAQGAMTKALELFRKDIAAKYKELGFHG</sequence>
<reference key="1">
    <citation type="journal article" date="2006" name="Comp. Biochem. Physiol.">
        <title>cDNA-derived amino acid sequences of myoglobins from nine species of whales and dolphins.</title>
        <authorList>
            <person name="Iwanami K."/>
            <person name="Mita H."/>
            <person name="Yamamoto Y."/>
            <person name="Fujise Y."/>
            <person name="Yamada T."/>
            <person name="Suzuki T."/>
        </authorList>
    </citation>
    <scope>NUCLEOTIDE SEQUENCE [MRNA]</scope>
</reference>
<comment type="function">
    <text evidence="1">Monomeric heme protein which primary function is to store oxygen and facilitate its diffusion within muscle tissues. Reversibly binds oxygen through a pentacoordinated heme iron and enables its timely and efficient release as needed during periods of heightened demand. Depending on the oxidative conditions of tissues and cells, and in addition to its ability to bind oxygen, it also has a nitrite reductase activity whereby it regulates the production of bioactive nitric oxide. Under stress conditions, like hypoxia and anoxia, it also protects cells against reactive oxygen species thanks to its pseudoperoxidase activity.</text>
</comment>
<comment type="catalytic activity">
    <reaction evidence="1">
        <text>Fe(III)-heme b-[protein] + nitric oxide + H2O = Fe(II)-heme b-[protein] + nitrite + 2 H(+)</text>
        <dbReference type="Rhea" id="RHEA:77711"/>
        <dbReference type="Rhea" id="RHEA-COMP:18975"/>
        <dbReference type="Rhea" id="RHEA-COMP:18976"/>
        <dbReference type="ChEBI" id="CHEBI:15377"/>
        <dbReference type="ChEBI" id="CHEBI:15378"/>
        <dbReference type="ChEBI" id="CHEBI:16301"/>
        <dbReference type="ChEBI" id="CHEBI:16480"/>
        <dbReference type="ChEBI" id="CHEBI:55376"/>
        <dbReference type="ChEBI" id="CHEBI:60344"/>
    </reaction>
    <physiologicalReaction direction="right-to-left" evidence="1">
        <dbReference type="Rhea" id="RHEA:77713"/>
    </physiologicalReaction>
</comment>
<comment type="catalytic activity">
    <reaction evidence="1">
        <text>H2O2 + AH2 = A + 2 H2O</text>
        <dbReference type="Rhea" id="RHEA:30275"/>
        <dbReference type="ChEBI" id="CHEBI:13193"/>
        <dbReference type="ChEBI" id="CHEBI:15377"/>
        <dbReference type="ChEBI" id="CHEBI:16240"/>
        <dbReference type="ChEBI" id="CHEBI:17499"/>
    </reaction>
</comment>
<comment type="subunit">
    <text evidence="2">Monomeric.</text>
</comment>
<comment type="subcellular location">
    <subcellularLocation>
        <location evidence="1">Cytoplasm</location>
        <location evidence="1">Sarcoplasm</location>
    </subcellularLocation>
</comment>
<comment type="similarity">
    <text evidence="7">Belongs to the globin family.</text>
</comment>
<evidence type="ECO:0000250" key="1">
    <source>
        <dbReference type="UniProtKB" id="P02144"/>
    </source>
</evidence>
<evidence type="ECO:0000250" key="2">
    <source>
        <dbReference type="UniProtKB" id="P02185"/>
    </source>
</evidence>
<evidence type="ECO:0000250" key="3">
    <source>
        <dbReference type="UniProtKB" id="P02189"/>
    </source>
</evidence>
<evidence type="ECO:0000250" key="4">
    <source>
        <dbReference type="UniProtKB" id="P04247"/>
    </source>
</evidence>
<evidence type="ECO:0000250" key="5">
    <source>
        <dbReference type="UniProtKB" id="P68082"/>
    </source>
</evidence>
<evidence type="ECO:0000250" key="6">
    <source>
        <dbReference type="UniProtKB" id="Q9QZ76"/>
    </source>
</evidence>
<evidence type="ECO:0000255" key="7">
    <source>
        <dbReference type="PROSITE-ProRule" id="PRU00238"/>
    </source>
</evidence>
<proteinExistence type="evidence at transcript level"/>
<accession>Q0KIY0</accession>
<protein>
    <recommendedName>
        <fullName>Myoglobin</fullName>
    </recommendedName>
    <alternativeName>
        <fullName evidence="1">Nitrite reductase MB</fullName>
        <ecNumber evidence="1">1.7.-.-</ecNumber>
    </alternativeName>
    <alternativeName>
        <fullName evidence="1">Pseudoperoxidase MB</fullName>
        <ecNumber evidence="1">1.11.1.-</ecNumber>
    </alternativeName>
</protein>
<feature type="chain" id="PRO_0000261581" description="Myoglobin">
    <location>
        <begin position="1"/>
        <end position="154"/>
    </location>
</feature>
<feature type="domain" description="Globin" evidence="7">
    <location>
        <begin position="2"/>
        <end position="148"/>
    </location>
</feature>
<feature type="binding site" evidence="5">
    <location>
        <position position="65"/>
    </location>
    <ligand>
        <name>nitrite</name>
        <dbReference type="ChEBI" id="CHEBI:16301"/>
    </ligand>
</feature>
<feature type="binding site" evidence="3 7">
    <location>
        <position position="65"/>
    </location>
    <ligand>
        <name>O2</name>
        <dbReference type="ChEBI" id="CHEBI:15379"/>
    </ligand>
</feature>
<feature type="binding site" description="proximal binding residue" evidence="1">
    <location>
        <position position="94"/>
    </location>
    <ligand>
        <name>heme b</name>
        <dbReference type="ChEBI" id="CHEBI:60344"/>
    </ligand>
    <ligandPart>
        <name>Fe</name>
        <dbReference type="ChEBI" id="CHEBI:18248"/>
    </ligandPart>
</feature>
<feature type="modified residue" description="Phosphoserine" evidence="6">
    <location>
        <position position="4"/>
    </location>
</feature>
<feature type="modified residue" description="Phosphothreonine" evidence="4">
    <location>
        <position position="68"/>
    </location>
</feature>
<gene>
    <name type="primary">MB</name>
</gene>
<dbReference type="EC" id="1.7.-.-" evidence="1"/>
<dbReference type="EC" id="1.11.1.-" evidence="1"/>
<dbReference type="EMBL" id="AB271152">
    <property type="protein sequence ID" value="BAF03587.1"/>
    <property type="molecule type" value="mRNA"/>
</dbReference>
<dbReference type="SMR" id="Q0KIY0"/>
<dbReference type="GO" id="GO:0070062">
    <property type="term" value="C:extracellular exosome"/>
    <property type="evidence" value="ECO:0007669"/>
    <property type="project" value="TreeGrafter"/>
</dbReference>
<dbReference type="GO" id="GO:0016528">
    <property type="term" value="C:sarcoplasm"/>
    <property type="evidence" value="ECO:0000250"/>
    <property type="project" value="UniProtKB"/>
</dbReference>
<dbReference type="GO" id="GO:0020037">
    <property type="term" value="F:heme binding"/>
    <property type="evidence" value="ECO:0007669"/>
    <property type="project" value="InterPro"/>
</dbReference>
<dbReference type="GO" id="GO:0046872">
    <property type="term" value="F:metal ion binding"/>
    <property type="evidence" value="ECO:0007669"/>
    <property type="project" value="UniProtKB-KW"/>
</dbReference>
<dbReference type="GO" id="GO:0098809">
    <property type="term" value="F:nitrite reductase activity"/>
    <property type="evidence" value="ECO:0000250"/>
    <property type="project" value="UniProtKB"/>
</dbReference>
<dbReference type="GO" id="GO:0019825">
    <property type="term" value="F:oxygen binding"/>
    <property type="evidence" value="ECO:0007669"/>
    <property type="project" value="InterPro"/>
</dbReference>
<dbReference type="GO" id="GO:0005344">
    <property type="term" value="F:oxygen carrier activity"/>
    <property type="evidence" value="ECO:0000250"/>
    <property type="project" value="UniProtKB"/>
</dbReference>
<dbReference type="GO" id="GO:0004601">
    <property type="term" value="F:peroxidase activity"/>
    <property type="evidence" value="ECO:0000250"/>
    <property type="project" value="UniProtKB"/>
</dbReference>
<dbReference type="GO" id="GO:0019430">
    <property type="term" value="P:removal of superoxide radicals"/>
    <property type="evidence" value="ECO:0000250"/>
    <property type="project" value="UniProtKB"/>
</dbReference>
<dbReference type="Gene3D" id="6.10.140.2100">
    <property type="match status" value="1"/>
</dbReference>
<dbReference type="Gene3D" id="6.10.140.2110">
    <property type="match status" value="1"/>
</dbReference>
<dbReference type="InterPro" id="IPR000971">
    <property type="entry name" value="Globin"/>
</dbReference>
<dbReference type="InterPro" id="IPR009050">
    <property type="entry name" value="Globin-like_sf"/>
</dbReference>
<dbReference type="InterPro" id="IPR002335">
    <property type="entry name" value="Myoglobin"/>
</dbReference>
<dbReference type="PANTHER" id="PTHR47132">
    <property type="entry name" value="MYOGLOBIN"/>
    <property type="match status" value="1"/>
</dbReference>
<dbReference type="PANTHER" id="PTHR47132:SF1">
    <property type="entry name" value="MYOGLOBIN"/>
    <property type="match status" value="1"/>
</dbReference>
<dbReference type="Pfam" id="PF00042">
    <property type="entry name" value="Globin"/>
    <property type="match status" value="1"/>
</dbReference>
<dbReference type="PRINTS" id="PR00613">
    <property type="entry name" value="MYOGLOBIN"/>
</dbReference>
<dbReference type="SUPFAM" id="SSF46458">
    <property type="entry name" value="Globin-like"/>
    <property type="match status" value="1"/>
</dbReference>
<dbReference type="PROSITE" id="PS01033">
    <property type="entry name" value="GLOBIN"/>
    <property type="match status" value="1"/>
</dbReference>
<name>MYG_MESST</name>
<keyword id="KW-0963">Cytoplasm</keyword>
<keyword id="KW-0349">Heme</keyword>
<keyword id="KW-0408">Iron</keyword>
<keyword id="KW-0479">Metal-binding</keyword>
<keyword id="KW-0514">Muscle protein</keyword>
<keyword id="KW-0560">Oxidoreductase</keyword>
<keyword id="KW-0561">Oxygen transport</keyword>
<keyword id="KW-0597">Phosphoprotein</keyword>
<keyword id="KW-0813">Transport</keyword>